<organism>
    <name type="scientific">Streptococcus pneumoniae (strain ATCC 700669 / Spain 23F-1)</name>
    <dbReference type="NCBI Taxonomy" id="561276"/>
    <lineage>
        <taxon>Bacteria</taxon>
        <taxon>Bacillati</taxon>
        <taxon>Bacillota</taxon>
        <taxon>Bacilli</taxon>
        <taxon>Lactobacillales</taxon>
        <taxon>Streptococcaceae</taxon>
        <taxon>Streptococcus</taxon>
    </lineage>
</organism>
<dbReference type="EMBL" id="FM211187">
    <property type="protein sequence ID" value="CAR69657.1"/>
    <property type="molecule type" value="Genomic_DNA"/>
</dbReference>
<dbReference type="RefSeq" id="WP_000364990.1">
    <property type="nucleotide sequence ID" value="NC_011900.1"/>
</dbReference>
<dbReference type="SMR" id="B8ZNI6"/>
<dbReference type="KEGG" id="sne:SPN23F18950"/>
<dbReference type="HOGENOM" id="CLU_180108_0_0_9"/>
<dbReference type="GO" id="GO:0005886">
    <property type="term" value="C:plasma membrane"/>
    <property type="evidence" value="ECO:0007669"/>
    <property type="project" value="UniProtKB-SubCell"/>
</dbReference>
<dbReference type="HAMAP" id="MF_00363">
    <property type="entry name" value="UPF0154"/>
    <property type="match status" value="1"/>
</dbReference>
<dbReference type="InterPro" id="IPR005359">
    <property type="entry name" value="UPF0154"/>
</dbReference>
<dbReference type="Pfam" id="PF03672">
    <property type="entry name" value="UPF0154"/>
    <property type="match status" value="1"/>
</dbReference>
<gene>
    <name type="ordered locus">SPN23F18950</name>
</gene>
<feature type="chain" id="PRO_1000197731" description="UPF0154 protein SPN23F18950">
    <location>
        <begin position="1"/>
        <end position="82"/>
    </location>
</feature>
<feature type="transmembrane region" description="Helical" evidence="1">
    <location>
        <begin position="5"/>
        <end position="25"/>
    </location>
</feature>
<name>Y1895_STRPJ</name>
<keyword id="KW-1003">Cell membrane</keyword>
<keyword id="KW-0472">Membrane</keyword>
<keyword id="KW-0812">Transmembrane</keyword>
<keyword id="KW-1133">Transmembrane helix</keyword>
<accession>B8ZNI6</accession>
<reference key="1">
    <citation type="journal article" date="2009" name="J. Bacteriol.">
        <title>Role of conjugative elements in the evolution of the multidrug-resistant pandemic clone Streptococcus pneumoniae Spain23F ST81.</title>
        <authorList>
            <person name="Croucher N.J."/>
            <person name="Walker D."/>
            <person name="Romero P."/>
            <person name="Lennard N."/>
            <person name="Paterson G.K."/>
            <person name="Bason N.C."/>
            <person name="Mitchell A.M."/>
            <person name="Quail M.A."/>
            <person name="Andrew P.W."/>
            <person name="Parkhill J."/>
            <person name="Bentley S.D."/>
            <person name="Mitchell T.J."/>
        </authorList>
    </citation>
    <scope>NUCLEOTIDE SEQUENCE [LARGE SCALE GENOMIC DNA]</scope>
    <source>
        <strain>ATCC 700669 / Spain 23F-1</strain>
    </source>
</reference>
<protein>
    <recommendedName>
        <fullName evidence="1">UPF0154 protein SPN23F18950</fullName>
    </recommendedName>
</protein>
<sequence length="82" mass="9086">MDLLLAIVLIVLAFLGGALGGMYLVRKQIEKEFADNPRLNAEAVRTLLSANGQKPSEAKVQQVYHQIIRQQKAALANNKKKK</sequence>
<comment type="subcellular location">
    <subcellularLocation>
        <location evidence="1">Cell membrane</location>
        <topology evidence="1">Single-pass membrane protein</topology>
    </subcellularLocation>
</comment>
<comment type="similarity">
    <text evidence="1">Belongs to the UPF0154 family.</text>
</comment>
<evidence type="ECO:0000255" key="1">
    <source>
        <dbReference type="HAMAP-Rule" id="MF_00363"/>
    </source>
</evidence>
<proteinExistence type="inferred from homology"/>